<keyword id="KW-0134">Cell wall</keyword>
<keyword id="KW-0572">Peptidoglycan-anchor</keyword>
<keyword id="KW-1185">Reference proteome</keyword>
<keyword id="KW-0964">Secreted</keyword>
<keyword id="KW-0732">Signal</keyword>
<evidence type="ECO:0000255" key="1"/>
<evidence type="ECO:0000256" key="2">
    <source>
        <dbReference type="SAM" id="MobiDB-lite"/>
    </source>
</evidence>
<evidence type="ECO:0000269" key="3">
    <source>
    </source>
</evidence>
<evidence type="ECO:0000303" key="4">
    <source>
    </source>
</evidence>
<evidence type="ECO:0000305" key="5">
    <source>
    </source>
</evidence>
<evidence type="ECO:0000305" key="6">
    <source>
    </source>
</evidence>
<reference key="1">
    <citation type="book" date="2006" name="Gram positive pathogens, 2nd edition">
        <title>The Staphylococcus aureus NCTC 8325 genome.</title>
        <editorList>
            <person name="Fischetti V."/>
            <person name="Novick R."/>
            <person name="Ferretti J."/>
            <person name="Portnoy D."/>
            <person name="Rood J."/>
        </editorList>
        <authorList>
            <person name="Gillaspy A.F."/>
            <person name="Worrell V."/>
            <person name="Orvis J."/>
            <person name="Roe B.A."/>
            <person name="Dyer D.W."/>
            <person name="Iandolo J.J."/>
        </authorList>
    </citation>
    <scope>NUCLEOTIDE SEQUENCE [LARGE SCALE GENOMIC DNA]</scope>
    <source>
        <strain>NCTC 8325 / PS 47</strain>
    </source>
</reference>
<reference key="2">
    <citation type="journal article" date="2002" name="Proc. Natl. Acad. Sci. U.S.A.">
        <title>An iron-regulated sortase anchors a class of surface protein during Staphylococcus aureus pathogenesis.</title>
        <authorList>
            <person name="Mazmanian S.K."/>
            <person name="Ton-That H."/>
            <person name="Su K."/>
            <person name="Schneewind O."/>
        </authorList>
    </citation>
    <scope>SUBCELLULAR LOCATION</scope>
    <scope>PROCESSING BY SORTASE A</scope>
    <source>
        <strain>RN4220</strain>
    </source>
</reference>
<reference key="3">
    <citation type="journal article" date="2008" name="EMBO J.">
        <title>Signal peptides direct surface proteins to two distinct envelope locations of Staphylococcus aureus.</title>
        <authorList>
            <person name="DeDent A."/>
            <person name="Bae T."/>
            <person name="Missiakas D.M."/>
            <person name="Schneewind O."/>
        </authorList>
    </citation>
    <scope>SUBCELLULAR LOCATION</scope>
    <source>
        <strain>RN4220</strain>
    </source>
</reference>
<sequence>MAKYRGKPFQLYVKLSCSTMMATSIILTNILPYDAQAASEKDTEITKEILSKQDLLDKVDKAIRQIEQLKQLSASSKEHYKAQLNEAKTASQIDEIIKRANELDSKDNKSSHTEMNGQSDIDSKLDQLLKDLNEVSSNVDRGQQSGEDDLNAMKNDMSQTATTKHGEKDDKNDEAMVNKALEDLDHLNQQIHKSKDASKDTSEDPAVSTTDNNHEVAKTPNNDGSGHVVLNKFLSNEENQSHSNRLTDKLQGSDKINHAMIEKLAKSNASTQHYTYHKLNTLQSLDQRIANTQLPKNQKSDLMSEVNKTKERIKSQRNIILEELARTDDKKYATQSILESIFNKDEAVKILKDIRVDGKTDQQIADQITRHIDQLSLTTSDDLLTSLIDQSQDKSLLISQILQTKLGKAEADKLAKDWTNKGLSNRQIVDQLKKHFASTGDTSSDDILKAILNNAKDKKQAIETILATRIERQKAKLLADLITKIETDQNKIFNLVKSALNGKADDLLNLQKRLNQTKKDIDYILSPIVNRPSLLDRLNKNGKTTDLNKLANLMNQGSDLLDSIPDIPTPKPEKTLTLGKGNGLLSGLLNADGNVSLPKAGETIKEHWLPISVIVGAMGVLMIWLSRRNKLKNKA</sequence>
<proteinExistence type="inferred from homology"/>
<name>SASF_STAA8</name>
<dbReference type="EMBL" id="CP000253">
    <property type="protein sequence ID" value="ABD31969.1"/>
    <property type="molecule type" value="Genomic_DNA"/>
</dbReference>
<dbReference type="RefSeq" id="WP_001151900.1">
    <property type="nucleotide sequence ID" value="NZ_LS483365.1"/>
</dbReference>
<dbReference type="RefSeq" id="YP_501431.1">
    <property type="nucleotide sequence ID" value="NC_007795.1"/>
</dbReference>
<dbReference type="SMR" id="Q2FUW9"/>
<dbReference type="STRING" id="93061.SAOUHSC_02982"/>
<dbReference type="PaxDb" id="1280-SAXN108_2917"/>
<dbReference type="GeneID" id="3921464"/>
<dbReference type="KEGG" id="sao:SAOUHSC_02982"/>
<dbReference type="PATRIC" id="fig|93061.5.peg.2689"/>
<dbReference type="eggNOG" id="ENOG503051Q">
    <property type="taxonomic scope" value="Bacteria"/>
</dbReference>
<dbReference type="HOGENOM" id="CLU_029259_0_0_9"/>
<dbReference type="OrthoDB" id="2413648at2"/>
<dbReference type="Proteomes" id="UP000008816">
    <property type="component" value="Chromosome"/>
</dbReference>
<dbReference type="GO" id="GO:0005576">
    <property type="term" value="C:extracellular region"/>
    <property type="evidence" value="ECO:0007669"/>
    <property type="project" value="UniProtKB-KW"/>
</dbReference>
<dbReference type="Gene3D" id="1.20.5.420">
    <property type="entry name" value="Immunoglobulin FC, subunit C"/>
    <property type="match status" value="1"/>
</dbReference>
<dbReference type="InterPro" id="IPR002988">
    <property type="entry name" value="GA_module"/>
</dbReference>
<dbReference type="Pfam" id="PF01468">
    <property type="entry name" value="GA"/>
    <property type="match status" value="1"/>
</dbReference>
<gene>
    <name evidence="4" type="primary">sasF</name>
    <name type="ordered locus">SAOUHSC_02982</name>
</gene>
<comment type="subcellular location">
    <subcellularLocation>
        <location evidence="3 5">Secreted</location>
        <location evidence="3 5">Cell wall</location>
        <topology evidence="3 5">Peptidoglycan-anchor</topology>
    </subcellularLocation>
    <text evidence="3 5">Distributed in a discrete, punctate pattern with up to 3 loci per cell over the surface (PubMed:18800056). Does not localize with ClfA (PubMed:18800056). Exchanging the ClfA and SasF signal peptides retargets the mature protein on the cell surface (PubMed:18800056). Anchored to the cell wall by sortase A (Probable).</text>
</comment>
<feature type="signal peptide" evidence="1">
    <location>
        <begin position="1"/>
        <end position="37"/>
    </location>
</feature>
<feature type="chain" id="PRO_5004208097" description="Surface protein F">
    <location>
        <begin position="38"/>
        <end position="635"/>
    </location>
</feature>
<feature type="propeptide" id="PRO_0000445583" description="Removed by sortase" evidence="5 6">
    <location>
        <begin position="601"/>
        <end position="635"/>
    </location>
</feature>
<feature type="region of interest" description="Disordered" evidence="2">
    <location>
        <begin position="101"/>
        <end position="122"/>
    </location>
</feature>
<feature type="region of interest" description="Disordered" evidence="2">
    <location>
        <begin position="192"/>
        <end position="228"/>
    </location>
</feature>
<feature type="short sequence motif" description="LPXTG sorting signal" evidence="6">
    <location>
        <begin position="597"/>
        <end position="601"/>
    </location>
</feature>
<feature type="compositionally biased region" description="Basic and acidic residues" evidence="2">
    <location>
        <begin position="101"/>
        <end position="112"/>
    </location>
</feature>
<feature type="compositionally biased region" description="Basic and acidic residues" evidence="2">
    <location>
        <begin position="193"/>
        <end position="202"/>
    </location>
</feature>
<feature type="modified residue" description="Pentaglycyl murein peptidoglycan amidated alanine" evidence="6">
    <location>
        <position position="600"/>
    </location>
</feature>
<accession>Q2FUW9</accession>
<protein>
    <recommendedName>
        <fullName evidence="4">Surface protein F</fullName>
    </recommendedName>
</protein>
<organism>
    <name type="scientific">Staphylococcus aureus (strain NCTC 8325 / PS 47)</name>
    <dbReference type="NCBI Taxonomy" id="93061"/>
    <lineage>
        <taxon>Bacteria</taxon>
        <taxon>Bacillati</taxon>
        <taxon>Bacillota</taxon>
        <taxon>Bacilli</taxon>
        <taxon>Bacillales</taxon>
        <taxon>Staphylococcaceae</taxon>
        <taxon>Staphylococcus</taxon>
    </lineage>
</organism>